<comment type="function">
    <text evidence="3 4 5 6 7 10">Catalyzes the reductive dechlorination of tetrachloroethene (PCE) to trichloroethene (TCE) and of trichloroethene to cis-1,2-dichloroethene (DCE) (PubMed:11976751, PubMed:12420164, PubMed:24433392, PubMed:28671181, PubMed:8663199). In addition, trans-1,3-dichloropropene, 1,1,3-trichloropropene and 2,3-dichloropropene are reduced to a mixture of mono-chloropropenes, 1,1-dichloropropene, and 2-chloropropene, respectively (PubMed:11976751). Is also able to convert brominated phenols such as 4-bromophenol (4-BP), 2,4-dibromophenol (2,4-DBP) and 2,4,6-tribromophenol (2,4,6-TBP) (PubMed:28671181). Utilizes formate or pyruvate as electron donors (PubMed:16802174, PubMed:24433392). Titanium(III) citrate could also serve as electron donor (PubMed:11976751). Reduced methyl viologen can act as the artificial electron donor (PubMed:11976751, PubMed:12420164, PubMed:8663199).</text>
</comment>
<comment type="catalytic activity">
    <reaction evidence="3 4 6 7 10">
        <text>trichloroethene + chloride + A + H(+) = tetrachloroethene + AH2</text>
        <dbReference type="Rhea" id="RHEA:20353"/>
        <dbReference type="ChEBI" id="CHEBI:13193"/>
        <dbReference type="ChEBI" id="CHEBI:15378"/>
        <dbReference type="ChEBI" id="CHEBI:16602"/>
        <dbReference type="ChEBI" id="CHEBI:17300"/>
        <dbReference type="ChEBI" id="CHEBI:17499"/>
        <dbReference type="ChEBI" id="CHEBI:17996"/>
        <dbReference type="EC" id="1.21.99.5"/>
    </reaction>
    <physiologicalReaction direction="right-to-left" evidence="3 4 6 7 10">
        <dbReference type="Rhea" id="RHEA:20355"/>
    </physiologicalReaction>
</comment>
<comment type="catalytic activity">
    <reaction evidence="3 4 6 7 10">
        <text>trichloroethene + AH2 = (Z)-1,2-dichloroethene + chloride + A + H(+)</text>
        <dbReference type="Rhea" id="RHEA:67992"/>
        <dbReference type="ChEBI" id="CHEBI:13193"/>
        <dbReference type="ChEBI" id="CHEBI:15378"/>
        <dbReference type="ChEBI" id="CHEBI:16602"/>
        <dbReference type="ChEBI" id="CHEBI:17499"/>
        <dbReference type="ChEBI" id="CHEBI:17996"/>
        <dbReference type="ChEBI" id="CHEBI:28805"/>
    </reaction>
    <physiologicalReaction direction="left-to-right" evidence="3 4 6 7 10">
        <dbReference type="Rhea" id="RHEA:67993"/>
    </physiologicalReaction>
</comment>
<comment type="cofactor">
    <cofactor evidence="7 9 10">
        <name>[4Fe-4S] cluster</name>
        <dbReference type="ChEBI" id="CHEBI:49883"/>
    </cofactor>
    <text evidence="7 9 10">Binds 2 [4Fe-4S] clusters.</text>
</comment>
<comment type="cofactor">
    <cofactor evidence="3 4 6 7 10 12">
        <name>corrinoid</name>
        <dbReference type="ChEBI" id="CHEBI:33913"/>
    </cofactor>
    <text evidence="6 7 9 12">The corrinoid cofactor is norpseudovitamin B12 (norpseudo-B12), a natural B12 cofactor that lacks a characteristic methyl group of the cobamide structure (PubMed:24433392, PubMed:28671181, Ref.6). In vitro, can function with singly substituted benzimidazolyl-norcobamides cofactors (PubMed:29378885).</text>
</comment>
<comment type="activity regulation">
    <text evidence="5 6 7 10">Both the processed and unprocessed enzymes are catalytically active (PubMed:16802174). PCE-dependent growth and PceA activity are inhibited in the presence of high concentrations of 5,6-dimethylbenzimidazole (DMB), probably due to the formation a DMB-containing nor-B12 cofactor (PubMed:24433392). Dechlorination of PCE is stimulated by ammonium ions (PubMed:28671181, PubMed:8663199). Activity is inhibited by chlorinated methanes (PubMed:8663199).</text>
</comment>
<comment type="biophysicochemical properties">
    <kinetics>
        <KM evidence="10">0.2 mM for tetrachloroethene (with reduced methyl viologen as electron donor)</KM>
        <KM evidence="3">200 uM for tetrachloroethene (with reduced methyl viologen as electron donor)</KM>
        <KM evidence="10">0.24 mM for trichloroethene (with reduced methyl viologen as electron donor)</KM>
        <KM evidence="3">240 uM for trichloroethene (with reduced methyl viologen as electron donor)</KM>
        <KM evidence="3">250 uM for trans-1,3-dichloropropene (with reduced methyl viologen as electron donor)</KM>
        <KM evidence="3">250 uM for 1,1,3-trichloropropene (with reduced methyl viologen as electron donor)</KM>
        <KM evidence="3">600 uM for 2,3-dichloropropene (with reduced methyl viologen as electron donor)</KM>
        <KM evidence="7">99 uM for 4-BP</KM>
        <KM evidence="7">95 uM for 2,4-DBP</KM>
        <KM evidence="7">158 uM for 2,4,6-TBP</KM>
    </kinetics>
    <phDependence>
        <text evidence="10">Optimum pH is about 8.0.</text>
    </phDependence>
    <temperatureDependence>
        <text evidence="10">Optimum temperature is 42 degrees Celsius.</text>
    </temperatureDependence>
</comment>
<comment type="subunit">
    <text evidence="10">Monomer.</text>
</comment>
<comment type="subcellular location">
    <subcellularLocation>
        <location evidence="5 10 11">Cytoplasm</location>
    </subcellularLocation>
    <subcellularLocation>
        <location evidence="5">Cell inner membrane</location>
        <topology evidence="5">Peripheral membrane protein</topology>
        <orientation evidence="5">Cytoplasmic side</orientation>
    </subcellularLocation>
    <subcellularLocation>
        <location evidence="5">Cell inner membrane</location>
        <topology evidence="5">Peripheral membrane protein</topology>
        <orientation evidence="5">Periplasmic side</orientation>
    </subcellularLocation>
    <text evidence="5">The localization of the enzyme is dependent on the electron acceptor utilized. When the cells are grown with pyruvate plus fumarate, a major part of the enzyme is either localized in the cytoplasm or membrane associated facing the cytoplasm. In cells grown on pyruvate or formate as electron donors and PCE as electron acceptor, most of the enzyme is detected at the periplasmic side of the cytoplasmic membrane.</text>
</comment>
<comment type="PTM">
    <text evidence="1">Predicted to be exported by the Tat system. The position of the signal peptide cleavage has not been experimentally proven.</text>
</comment>
<comment type="biotechnology">
    <text evidence="8">Chlorinated ethenes are widely occurring as groundwater contaminants and PceA may play an important role in the degradation of these chlorinated environmental pollutants. S.multivorans enzyme can dechlorinate PCE in the presence of oxygen concentrations equal to or below 0.19 mg/L, which enhances the applicability to use S.multivorans for bioremediation, e.g. at oxic/anoxic interphases. Higher levels of oxygen impair PCE dechlorination by inhibiting or inactivating involved enzymes.</text>
</comment>
<comment type="miscellaneous">
    <text evidence="4">The pceA gene is detected in cells of strain N, but this strain cannot dechlorinate PCE. The inability of strain N to dechlorinate PCE is probably due to the absence in this strain of the specific PCE dehalogenase corrinoid cofactor.</text>
</comment>
<comment type="similarity">
    <text evidence="16">Belongs to the PceA family.</text>
</comment>
<name>PCEA_SULMU</name>
<evidence type="ECO:0000255" key="1">
    <source>
        <dbReference type="PROSITE-ProRule" id="PRU00648"/>
    </source>
</evidence>
<evidence type="ECO:0000255" key="2">
    <source>
        <dbReference type="PROSITE-ProRule" id="PRU00711"/>
    </source>
</evidence>
<evidence type="ECO:0000269" key="3">
    <source>
    </source>
</evidence>
<evidence type="ECO:0000269" key="4">
    <source>
    </source>
</evidence>
<evidence type="ECO:0000269" key="5">
    <source>
    </source>
</evidence>
<evidence type="ECO:0000269" key="6">
    <source>
    </source>
</evidence>
<evidence type="ECO:0000269" key="7">
    <source>
    </source>
</evidence>
<evidence type="ECO:0000269" key="8">
    <source>
    </source>
</evidence>
<evidence type="ECO:0000269" key="9">
    <source>
    </source>
</evidence>
<evidence type="ECO:0000269" key="10">
    <source>
    </source>
</evidence>
<evidence type="ECO:0000269" key="11">
    <source>
    </source>
</evidence>
<evidence type="ECO:0000269" key="12">
    <source ref="6"/>
</evidence>
<evidence type="ECO:0000303" key="13">
    <source>
    </source>
</evidence>
<evidence type="ECO:0000303" key="14">
    <source>
    </source>
</evidence>
<evidence type="ECO:0000303" key="15">
    <source>
    </source>
</evidence>
<evidence type="ECO:0000305" key="16"/>
<evidence type="ECO:0000312" key="17">
    <source>
        <dbReference type="EMBL" id="QEH06286.1"/>
    </source>
</evidence>
<evidence type="ECO:0000312" key="18">
    <source>
        <dbReference type="PDB" id="5M2G"/>
    </source>
</evidence>
<evidence type="ECO:0000312" key="19">
    <source>
        <dbReference type="PDB" id="5M8U"/>
    </source>
</evidence>
<evidence type="ECO:0000312" key="20">
    <source>
        <dbReference type="PDB" id="5M8W"/>
    </source>
</evidence>
<evidence type="ECO:0000312" key="21">
    <source>
        <dbReference type="PDB" id="5MA2"/>
    </source>
</evidence>
<evidence type="ECO:0000312" key="22">
    <source>
        <dbReference type="PDB" id="5OBP"/>
    </source>
</evidence>
<evidence type="ECO:0007744" key="23">
    <source>
        <dbReference type="PDB" id="5M2G"/>
    </source>
</evidence>
<evidence type="ECO:0007744" key="24">
    <source>
        <dbReference type="PDB" id="5M8U"/>
    </source>
</evidence>
<evidence type="ECO:0007744" key="25">
    <source>
        <dbReference type="PDB" id="5M8W"/>
    </source>
</evidence>
<evidence type="ECO:0007744" key="26">
    <source>
        <dbReference type="PDB" id="5MA2"/>
    </source>
</evidence>
<evidence type="ECO:0007744" key="27">
    <source>
        <dbReference type="PDB" id="5OBP"/>
    </source>
</evidence>
<evidence type="ECO:0007829" key="28">
    <source>
        <dbReference type="PDB" id="5M2G"/>
    </source>
</evidence>
<evidence type="ECO:0007829" key="29">
    <source>
        <dbReference type="PDB" id="5OBP"/>
    </source>
</evidence>
<gene>
    <name evidence="15" type="primary">pceA</name>
    <name evidence="17" type="ORF">SMN_1516</name>
</gene>
<proteinExistence type="evidence at protein level"/>
<sequence>MEKKKKPELSRRDFGKLIIGGGAAATIAPFGVPGANAAEKEKNAAEIRQQFAMTAGSPIIVNDKLERYAEVRTAFTHPTSFFKPNYKGEVKPWFLSAYDEKVRQIENGENGPKMKAKNVGEARAGRALEAAGWTLDINYGNIYPNRFFMLWSGETMTNTQLWAPVGLDRRPPDTTDPVELTNYVKFAARMAGADLVGVARLNRNWVYSEAVTIPADVPYEQSLHKEIEKPIVFKDVPLPIETDDELIIPNTCENVIVAGIAMNREMMQTAPNSMACATTAFCYSRMCMFDMWLCQFIRYMGYYAIPSCNGVGQSVAFAVEAGLGQASRMGACITPEFGPNVRLTKVFTNMPLVPDKPIDFGVTEFCETCKKCARECPSKAITEGPRTFEGRSIHNQSGKLQWQNDYNKCLGYWPESGGYCGVCVAVCPFTKGNIWIHDGVEWLIDNTRFLDPLMLGMDDALGYGAKRNITEVWDGKINTYGLDADHFRDTVSFRKDRVKKS</sequence>
<protein>
    <recommendedName>
        <fullName evidence="14">Tetrachloroethene reductive dehalogenase</fullName>
        <ecNumber evidence="3 4 6 7 10">1.21.99.5</ecNumber>
    </recommendedName>
    <alternativeName>
        <fullName evidence="13">PCE dehalogenase</fullName>
    </alternativeName>
</protein>
<keyword id="KW-0002">3D-structure</keyword>
<keyword id="KW-0004">4Fe-4S</keyword>
<keyword id="KW-0997">Cell inner membrane</keyword>
<keyword id="KW-1003">Cell membrane</keyword>
<keyword id="KW-0963">Cytoplasm</keyword>
<keyword id="KW-0903">Direct protein sequencing</keyword>
<keyword id="KW-0408">Iron</keyword>
<keyword id="KW-0411">Iron-sulfur</keyword>
<keyword id="KW-0472">Membrane</keyword>
<keyword id="KW-0479">Metal-binding</keyword>
<keyword id="KW-0560">Oxidoreductase</keyword>
<keyword id="KW-0677">Repeat</keyword>
<keyword id="KW-0732">Signal</keyword>
<feature type="signal peptide" description="Tat-type signal" evidence="1">
    <location>
        <begin position="1"/>
        <end position="37"/>
    </location>
</feature>
<feature type="chain" id="PRO_0000453974" description="Tetrachloroethene reductive dehalogenase" evidence="1">
    <location>
        <begin position="38"/>
        <end position="501"/>
    </location>
</feature>
<feature type="domain" description="4Fe-4S ferredoxin-type 1" evidence="2">
    <location>
        <begin position="356"/>
        <end position="386"/>
    </location>
</feature>
<feature type="domain" description="4Fe-4S ferredoxin-type 2" evidence="2">
    <location>
        <begin position="420"/>
        <end position="439"/>
    </location>
</feature>
<feature type="binding site" evidence="7 9 18 19 20 21 22">
    <location>
        <position position="74"/>
    </location>
    <ligand>
        <name>corrinoid</name>
        <dbReference type="ChEBI" id="CHEBI:33913"/>
    </ligand>
</feature>
<feature type="binding site" evidence="7 9 18 19 20 21 22">
    <location>
        <position position="207"/>
    </location>
    <ligand>
        <name>corrinoid</name>
        <dbReference type="ChEBI" id="CHEBI:33913"/>
    </ligand>
</feature>
<feature type="binding site" evidence="7 9 18 19 20 21 22">
    <location>
        <begin position="309"/>
        <end position="314"/>
    </location>
    <ligand>
        <name>corrinoid</name>
        <dbReference type="ChEBI" id="CHEBI:33913"/>
    </ligand>
</feature>
<feature type="binding site" evidence="7 9 18 19 20 21 22">
    <location>
        <begin position="329"/>
        <end position="332"/>
    </location>
    <ligand>
        <name>corrinoid</name>
        <dbReference type="ChEBI" id="CHEBI:33913"/>
    </ligand>
</feature>
<feature type="binding site" evidence="7 9 18 19 20 21 22">
    <location>
        <begin position="341"/>
        <end position="343"/>
    </location>
    <ligand>
        <name>corrinoid</name>
        <dbReference type="ChEBI" id="CHEBI:33913"/>
    </ligand>
</feature>
<feature type="binding site" evidence="7 9 18 19 20 21 22">
    <location>
        <position position="366"/>
    </location>
    <ligand>
        <name>[4Fe-4S] cluster</name>
        <dbReference type="ChEBI" id="CHEBI:49883"/>
        <label>1</label>
    </ligand>
</feature>
<feature type="binding site" evidence="7 9 18 19 20 21 22">
    <location>
        <position position="369"/>
    </location>
    <ligand>
        <name>[4Fe-4S] cluster</name>
        <dbReference type="ChEBI" id="CHEBI:49883"/>
        <label>1</label>
    </ligand>
</feature>
<feature type="binding site" evidence="7 9 18 19 20 21 22">
    <location>
        <position position="372"/>
    </location>
    <ligand>
        <name>[4Fe-4S] cluster</name>
        <dbReference type="ChEBI" id="CHEBI:49883"/>
        <label>1</label>
    </ligand>
</feature>
<feature type="binding site" evidence="7 9 18 19 20 21 22">
    <location>
        <position position="376"/>
    </location>
    <ligand>
        <name>[4Fe-4S] cluster</name>
        <dbReference type="ChEBI" id="CHEBI:49883"/>
        <label>2</label>
    </ligand>
</feature>
<feature type="binding site" evidence="7 9 18 19 20 21 22">
    <location>
        <begin position="394"/>
        <end position="401"/>
    </location>
    <ligand>
        <name>corrinoid</name>
        <dbReference type="ChEBI" id="CHEBI:33913"/>
    </ligand>
</feature>
<feature type="binding site" evidence="7 9 18 19 20 21 22">
    <location>
        <position position="409"/>
    </location>
    <ligand>
        <name>[4Fe-4S] cluster</name>
        <dbReference type="ChEBI" id="CHEBI:49883"/>
        <label>2</label>
    </ligand>
</feature>
<feature type="binding site" evidence="7 9 18 19 20 21 22">
    <location>
        <position position="419"/>
    </location>
    <ligand>
        <name>corrinoid</name>
        <dbReference type="ChEBI" id="CHEBI:33913"/>
    </ligand>
</feature>
<feature type="binding site" evidence="7 9 18 19 20 21 22">
    <location>
        <position position="420"/>
    </location>
    <ligand>
        <name>[4Fe-4S] cluster</name>
        <dbReference type="ChEBI" id="CHEBI:49883"/>
        <label>2</label>
    </ligand>
</feature>
<feature type="binding site" evidence="7 9 18 19 20 21 22">
    <location>
        <position position="423"/>
    </location>
    <ligand>
        <name>[4Fe-4S] cluster</name>
        <dbReference type="ChEBI" id="CHEBI:49883"/>
        <label>2</label>
    </ligand>
</feature>
<feature type="binding site" evidence="7 9 18 19 20 21 22">
    <location>
        <position position="427"/>
    </location>
    <ligand>
        <name>[4Fe-4S] cluster</name>
        <dbReference type="ChEBI" id="CHEBI:49883"/>
        <label>1</label>
    </ligand>
</feature>
<feature type="helix" evidence="29">
    <location>
        <begin position="44"/>
        <end position="50"/>
    </location>
</feature>
<feature type="helix" evidence="29">
    <location>
        <begin position="70"/>
        <end position="72"/>
    </location>
</feature>
<feature type="turn" evidence="29">
    <location>
        <begin position="74"/>
        <end position="76"/>
    </location>
</feature>
<feature type="turn" evidence="29">
    <location>
        <begin position="78"/>
        <end position="80"/>
    </location>
</feature>
<feature type="strand" evidence="29">
    <location>
        <begin position="81"/>
        <end position="84"/>
    </location>
</feature>
<feature type="strand" evidence="29">
    <location>
        <begin position="90"/>
        <end position="92"/>
    </location>
</feature>
<feature type="helix" evidence="29">
    <location>
        <begin position="93"/>
        <end position="106"/>
    </location>
</feature>
<feature type="strand" evidence="29">
    <location>
        <begin position="109"/>
        <end position="111"/>
    </location>
</feature>
<feature type="helix" evidence="29">
    <location>
        <begin position="119"/>
        <end position="132"/>
    </location>
</feature>
<feature type="helix" evidence="29">
    <location>
        <begin position="133"/>
        <end position="135"/>
    </location>
</feature>
<feature type="turn" evidence="29">
    <location>
        <begin position="138"/>
        <end position="140"/>
    </location>
</feature>
<feature type="helix" evidence="29">
    <location>
        <begin position="157"/>
        <end position="162"/>
    </location>
</feature>
<feature type="helix" evidence="29">
    <location>
        <begin position="163"/>
        <end position="165"/>
    </location>
</feature>
<feature type="turn" evidence="29">
    <location>
        <begin position="167"/>
        <end position="169"/>
    </location>
</feature>
<feature type="helix" evidence="29">
    <location>
        <begin position="177"/>
        <end position="190"/>
    </location>
</feature>
<feature type="strand" evidence="29">
    <location>
        <begin position="194"/>
        <end position="200"/>
    </location>
</feature>
<feature type="helix" evidence="29">
    <location>
        <begin position="203"/>
        <end position="205"/>
    </location>
</feature>
<feature type="strand" evidence="29">
    <location>
        <begin position="208"/>
        <end position="212"/>
    </location>
</feature>
<feature type="helix" evidence="29">
    <location>
        <begin position="219"/>
        <end position="224"/>
    </location>
</feature>
<feature type="strand" evidence="29">
    <location>
        <begin position="227"/>
        <end position="235"/>
    </location>
</feature>
<feature type="strand" evidence="29">
    <location>
        <begin position="246"/>
        <end position="249"/>
    </location>
</feature>
<feature type="strand" evidence="29">
    <location>
        <begin position="254"/>
        <end position="261"/>
    </location>
</feature>
<feature type="helix" evidence="29">
    <location>
        <begin position="264"/>
        <end position="267"/>
    </location>
</feature>
<feature type="turn" evidence="29">
    <location>
        <begin position="268"/>
        <end position="271"/>
    </location>
</feature>
<feature type="helix" evidence="29">
    <location>
        <begin position="273"/>
        <end position="299"/>
    </location>
</feature>
<feature type="strand" evidence="28">
    <location>
        <begin position="304"/>
        <end position="306"/>
    </location>
</feature>
<feature type="strand" evidence="29">
    <location>
        <begin position="310"/>
        <end position="312"/>
    </location>
</feature>
<feature type="helix" evidence="29">
    <location>
        <begin position="314"/>
        <end position="320"/>
    </location>
</feature>
<feature type="strand" evidence="29">
    <location>
        <begin position="330"/>
        <end position="334"/>
    </location>
</feature>
<feature type="turn" evidence="29">
    <location>
        <begin position="335"/>
        <end position="337"/>
    </location>
</feature>
<feature type="strand" evidence="29">
    <location>
        <begin position="341"/>
        <end position="348"/>
    </location>
</feature>
<feature type="helix" evidence="29">
    <location>
        <begin position="362"/>
        <end position="369"/>
    </location>
</feature>
<feature type="helix" evidence="29">
    <location>
        <begin position="371"/>
        <end position="375"/>
    </location>
</feature>
<feature type="strand" evidence="29">
    <location>
        <begin position="387"/>
        <end position="389"/>
    </location>
</feature>
<feature type="strand" evidence="29">
    <location>
        <begin position="397"/>
        <end position="399"/>
    </location>
</feature>
<feature type="helix" evidence="29">
    <location>
        <begin position="406"/>
        <end position="416"/>
    </location>
</feature>
<feature type="helix" evidence="29">
    <location>
        <begin position="422"/>
        <end position="426"/>
    </location>
</feature>
<feature type="helix" evidence="29">
    <location>
        <begin position="428"/>
        <end position="430"/>
    </location>
</feature>
<feature type="strand" evidence="29">
    <location>
        <begin position="435"/>
        <end position="437"/>
    </location>
</feature>
<feature type="strand" evidence="29">
    <location>
        <begin position="439"/>
        <end position="444"/>
    </location>
</feature>
<feature type="helix" evidence="29">
    <location>
        <begin position="446"/>
        <end position="448"/>
    </location>
</feature>
<feature type="helix" evidence="29">
    <location>
        <begin position="469"/>
        <end position="473"/>
    </location>
</feature>
<feature type="helix" evidence="29">
    <location>
        <begin position="479"/>
        <end position="481"/>
    </location>
</feature>
<feature type="turn" evidence="29">
    <location>
        <begin position="484"/>
        <end position="486"/>
    </location>
</feature>
<feature type="helix" evidence="29">
    <location>
        <begin position="487"/>
        <end position="490"/>
    </location>
</feature>
<feature type="helix" evidence="29">
    <location>
        <begin position="494"/>
        <end position="497"/>
    </location>
</feature>
<accession>O68252</accession>
<reference key="1">
    <citation type="journal article" date="1998" name="J. Bacteriol.">
        <title>Tetrachloroethene dehalogenase from Dehalospirillum multivorans: cloning, sequencing of the encoding genes, and expression of the pceA gene in Escherichia coli.</title>
        <authorList>
            <person name="Neumann A."/>
            <person name="Wohlfarth G."/>
            <person name="Diekert G."/>
        </authorList>
    </citation>
    <scope>NUCLEOTIDE SEQUENCE [GENOMIC DNA]</scope>
    <scope>PARTIAL PROTEIN SEQUENCE</scope>
    <scope>SUBCELLULAR LOCATION</scope>
</reference>
<reference key="2">
    <citation type="submission" date="2019-08" db="EMBL/GenBank/DDBJ databases">
        <title>Organohalide respiration in Sulfurospirillum species is regulated by a two-component system as unraveled by comparative genomics, and transcriptomics, and regulator binding studies.</title>
        <authorList>
            <person name="Goris T."/>
            <person name="Esken J."/>
            <person name="Gadkari J."/>
            <person name="Bischler T."/>
            <person name="Foerstner K."/>
            <person name="Sharma C.M."/>
            <person name="Diekert G."/>
            <person name="Schubert T."/>
        </authorList>
    </citation>
    <scope>NUCLEOTIDE SEQUENCE [LARGE SCALE GENOMIC DNA]</scope>
    <source>
        <strain>DSM 15119 / N</strain>
    </source>
</reference>
<reference key="3">
    <citation type="journal article" date="1996" name="J. Biol. Chem.">
        <title>Purification and characterization of tetrachloroethene reductive dehalogenase from Dehalospirillum multivorans.</title>
        <authorList>
            <person name="Neumann A."/>
            <person name="Wohlfarth G."/>
            <person name="Diekert G."/>
        </authorList>
    </citation>
    <scope>FUNCTION</scope>
    <scope>CATALYTIC ACTIVITY</scope>
    <scope>COFACTOR</scope>
    <scope>ACTIVITY REGULATION</scope>
    <scope>BIOPHYSICOCHEMICAL PROPERTIES</scope>
    <scope>SUBUNIT</scope>
    <scope>SUBCELLULAR LOCATION</scope>
</reference>
<reference key="4">
    <citation type="journal article" date="2002" name="Arch. Microbiol.">
        <title>Tetrachloroethene reductive dehalogenase of Dehalospirillum multivorans: substrate specificity of the native enzyme and its corrinoid cofactor.</title>
        <authorList>
            <person name="Neumann A."/>
            <person name="Siebert A."/>
            <person name="Trescher T."/>
            <person name="Reinhardt S."/>
            <person name="Wohlfarth G."/>
            <person name="Diekert G."/>
        </authorList>
    </citation>
    <scope>FUNCTION</scope>
    <scope>CATALYTIC ACTIVITY</scope>
    <scope>COFACTOR</scope>
    <scope>BIOPHYSICOCHEMICAL PROPERTIES</scope>
</reference>
<reference key="5">
    <citation type="journal article" date="2002" name="Arch. Microbiol.">
        <title>A non-dechlorinating strain of Dehalospirillum multivorans: evidence for a key role of the corrinoid cofactor in the synthesis of an active tetrachloroethene dehalogenase.</title>
        <authorList>
            <person name="Siebert A."/>
            <person name="Neumann A."/>
            <person name="Schubert T."/>
            <person name="Diekert G."/>
        </authorList>
    </citation>
    <scope>FUNCTION</scope>
    <scope>CATALYTIC ACTIVITY</scope>
    <scope>COFACTOR</scope>
    <scope>LACK OF ACTIVITY IN STRAIN N</scope>
    <source>
        <strain>DSM 12446 / K</strain>
        <strain>DSM 15119 / N</strain>
    </source>
</reference>
<reference key="6">
    <citation type="journal article" date="2003" name="Helv. Chim. Acta">
        <title>The cofactor of tetrachloroethene reductive dehalogenase of Dehalospirillum multivorans is norpseudo-B12, a new type of a natural corrinoid.</title>
        <authorList>
            <person name="Kraeutler B."/>
            <person name="Fieber W."/>
            <person name="Ostermann S."/>
            <person name="Fasching M."/>
            <person name="Ongania K.-H."/>
            <person name="Gruber K."/>
            <person name="Kratky C."/>
            <person name="Mikl C."/>
            <person name="Siebert A."/>
            <person name="Diekert G."/>
        </authorList>
    </citation>
    <scope>COFACTOR</scope>
</reference>
<reference key="7">
    <citation type="journal article" date="2006" name="Arch. Microbiol.">
        <title>Growth substrate dependent localization of tetrachloroethene reductive dehalogenase in Sulfurospirillum multivorans.</title>
        <authorList>
            <person name="John M."/>
            <person name="Schmitz R.P."/>
            <person name="Westermann M."/>
            <person name="Richter W."/>
            <person name="Diekert G."/>
        </authorList>
    </citation>
    <scope>FUNCTION</scope>
    <scope>SUBCELLULAR LOCATION</scope>
    <scope>ACTIVITY REGULATION</scope>
    <source>
        <strain>DSM 12446 / K</strain>
    </source>
</reference>
<reference key="8">
    <citation type="journal article" date="2014" name="Environ. Microbiol.">
        <title>Exogenous 5,6-dimethylbenzimidazole caused production of a non-functional tetrachloroethene reductive dehalogenase in Sulfurospirillum multivorans.</title>
        <authorList>
            <person name="Keller S."/>
            <person name="Ruetz M."/>
            <person name="Kunze C."/>
            <person name="Kraeutler B."/>
            <person name="Diekert G."/>
            <person name="Schubert T."/>
        </authorList>
    </citation>
    <scope>FUNCTION</scope>
    <scope>CATALYTIC ACTIVITY</scope>
    <scope>COFACTOR</scope>
    <scope>ACTIVITY REGULATION</scope>
    <source>
        <strain>DSM 12446 / K</strain>
    </source>
</reference>
<reference key="9">
    <citation type="journal article" date="2018" name="FEMS Microbiol. Ecol.">
        <title>Reductive tetrachloroethene dehalogenation in the presence of oxygen by Sulfurospirillum multivorans: physiological studies and proteome analysis.</title>
        <authorList>
            <person name="Gadkari J."/>
            <person name="Goris T."/>
            <person name="Schiffmann C.L."/>
            <person name="Rubick R."/>
            <person name="Adrian L."/>
            <person name="Schubert T."/>
            <person name="Diekert G."/>
        </authorList>
    </citation>
    <scope>BIOTECHNOLOGY</scope>
    <source>
        <strain>DSM 12446 / K</strain>
    </source>
</reference>
<reference evidence="23 24 25 26" key="10">
    <citation type="journal article" date="2017" name="Nat. Commun.">
        <title>Cobamide-mediated enzymatic reductive dehalogenation via long-range electron transfer.</title>
        <authorList>
            <person name="Kunze C."/>
            <person name="Bommer M."/>
            <person name="Hagen W.R."/>
            <person name="Uksa M."/>
            <person name="Dobbek H."/>
            <person name="Schubert T."/>
            <person name="Diekert G."/>
        </authorList>
    </citation>
    <scope>X-RAY CRYSTALLOGRAPHY (1.80 ANGSTROMS) OF 38-501 IN COMPLEXES WITH IRON-SULFUR CLUSTERS; NORPSEUDO-B12 AND SUBSTRATES</scope>
    <scope>FUNCTION</scope>
    <scope>CATALYTIC ACTIVITY</scope>
    <scope>COFACTOR</scope>
    <scope>ACTIVITY REGULATION</scope>
    <scope>BIOPHYSICOCHEMICAL PROPERTIES</scope>
</reference>
<reference evidence="27" key="11">
    <citation type="journal article" date="2018" name="J. Bacteriol.">
        <title>Selective utilization of benzimidazolyl-norcobamides as cofactors by the tetrachloroethene reductive dehalogenase of Sulfurospirillum multivorans.</title>
        <authorList>
            <person name="Keller S."/>
            <person name="Kunze C."/>
            <person name="Bommer M."/>
            <person name="Paetz C."/>
            <person name="Menezes R.C."/>
            <person name="Svatos A."/>
            <person name="Dobbek H."/>
            <person name="Schubert T."/>
        </authorList>
    </citation>
    <scope>X-RAY CRYSTALLOGRAPHY (1.59 ANGSTROMS) OF 38-501 IN COMPLEX WITH IRON-SULFUR CLUSTER AND HYDROXYBENZIMIDAZOLYL NORCOBAMIDE</scope>
    <scope>COFACTOR</scope>
    <source>
        <strain>DSM 12446 / K</strain>
    </source>
</reference>
<dbReference type="EC" id="1.21.99.5" evidence="3 4 6 7 10"/>
<dbReference type="EMBL" id="AF022812">
    <property type="protein sequence ID" value="AAC60788.1"/>
    <property type="molecule type" value="Genomic_DNA"/>
</dbReference>
<dbReference type="EMBL" id="CP042966">
    <property type="protein sequence ID" value="QEH06286.1"/>
    <property type="molecule type" value="Genomic_DNA"/>
</dbReference>
<dbReference type="RefSeq" id="WP_148512140.1">
    <property type="nucleotide sequence ID" value="NZ_CP042966.1"/>
</dbReference>
<dbReference type="PDB" id="5M2G">
    <property type="method" value="X-ray"/>
    <property type="resolution" value="1.80 A"/>
    <property type="chains" value="A/B=38-501"/>
</dbReference>
<dbReference type="PDB" id="5M8U">
    <property type="method" value="X-ray"/>
    <property type="resolution" value="1.90 A"/>
    <property type="chains" value="A/B=38-501"/>
</dbReference>
<dbReference type="PDB" id="5M8W">
    <property type="method" value="X-ray"/>
    <property type="resolution" value="2.28 A"/>
    <property type="chains" value="A/B=38-501"/>
</dbReference>
<dbReference type="PDB" id="5MA2">
    <property type="method" value="X-ray"/>
    <property type="resolution" value="1.88 A"/>
    <property type="chains" value="A/B=38-501"/>
</dbReference>
<dbReference type="PDB" id="5OBP">
    <property type="method" value="X-ray"/>
    <property type="resolution" value="1.59 A"/>
    <property type="chains" value="A/B=38-501"/>
</dbReference>
<dbReference type="PDBsum" id="5M2G"/>
<dbReference type="PDBsum" id="5M8U"/>
<dbReference type="PDBsum" id="5M8W"/>
<dbReference type="PDBsum" id="5MA2"/>
<dbReference type="PDBsum" id="5OBP"/>
<dbReference type="SMR" id="O68252"/>
<dbReference type="STRING" id="1150621.SMUL_1531"/>
<dbReference type="OrthoDB" id="9815745at2"/>
<dbReference type="GO" id="GO:0005737">
    <property type="term" value="C:cytoplasm"/>
    <property type="evidence" value="ECO:0007669"/>
    <property type="project" value="UniProtKB-SubCell"/>
</dbReference>
<dbReference type="GO" id="GO:0005886">
    <property type="term" value="C:plasma membrane"/>
    <property type="evidence" value="ECO:0007669"/>
    <property type="project" value="UniProtKB-SubCell"/>
</dbReference>
<dbReference type="GO" id="GO:0051539">
    <property type="term" value="F:4 iron, 4 sulfur cluster binding"/>
    <property type="evidence" value="ECO:0007669"/>
    <property type="project" value="UniProtKB-KW"/>
</dbReference>
<dbReference type="GO" id="GO:0046872">
    <property type="term" value="F:metal ion binding"/>
    <property type="evidence" value="ECO:0007669"/>
    <property type="project" value="UniProtKB-KW"/>
</dbReference>
<dbReference type="GO" id="GO:0016491">
    <property type="term" value="F:oxidoreductase activity"/>
    <property type="evidence" value="ECO:0007669"/>
    <property type="project" value="UniProtKB-KW"/>
</dbReference>
<dbReference type="Gene3D" id="3.30.70.20">
    <property type="match status" value="1"/>
</dbReference>
<dbReference type="InterPro" id="IPR017896">
    <property type="entry name" value="4Fe4S_Fe-S-bd"/>
</dbReference>
<dbReference type="InterPro" id="IPR017900">
    <property type="entry name" value="4Fe4S_Fe_S_CS"/>
</dbReference>
<dbReference type="InterPro" id="IPR012832">
    <property type="entry name" value="RDH"/>
</dbReference>
<dbReference type="InterPro" id="IPR006311">
    <property type="entry name" value="TAT_signal"/>
</dbReference>
<dbReference type="NCBIfam" id="TIGR02486">
    <property type="entry name" value="RDH"/>
    <property type="match status" value="1"/>
</dbReference>
<dbReference type="PANTHER" id="PTHR42827:SF1">
    <property type="entry name" value="IRON-SULFUR CLUSTER-BINDING PROTEIN"/>
    <property type="match status" value="1"/>
</dbReference>
<dbReference type="PANTHER" id="PTHR42827">
    <property type="entry name" value="IRON-SULFUR CLUSTER-BINDING PROTEIN-RELATED"/>
    <property type="match status" value="1"/>
</dbReference>
<dbReference type="Pfam" id="PF13484">
    <property type="entry name" value="Fer4_16"/>
    <property type="match status" value="1"/>
</dbReference>
<dbReference type="SUPFAM" id="SSF54862">
    <property type="entry name" value="4Fe-4S ferredoxins"/>
    <property type="match status" value="1"/>
</dbReference>
<dbReference type="PROSITE" id="PS00198">
    <property type="entry name" value="4FE4S_FER_1"/>
    <property type="match status" value="1"/>
</dbReference>
<dbReference type="PROSITE" id="PS51379">
    <property type="entry name" value="4FE4S_FER_2"/>
    <property type="match status" value="2"/>
</dbReference>
<dbReference type="PROSITE" id="PS51318">
    <property type="entry name" value="TAT"/>
    <property type="match status" value="1"/>
</dbReference>
<organism>
    <name type="scientific">Sulfurospirillum multivorans</name>
    <name type="common">Dehalospirillum multivorans</name>
    <dbReference type="NCBI Taxonomy" id="66821"/>
    <lineage>
        <taxon>Bacteria</taxon>
        <taxon>Pseudomonadati</taxon>
        <taxon>Campylobacterota</taxon>
        <taxon>Epsilonproteobacteria</taxon>
        <taxon>Campylobacterales</taxon>
        <taxon>Sulfurospirillaceae</taxon>
        <taxon>Sulfurospirillum</taxon>
    </lineage>
</organism>